<dbReference type="EMBL" id="AY653733">
    <property type="protein sequence ID" value="AAV50484.1"/>
    <property type="molecule type" value="Genomic_DNA"/>
</dbReference>
<dbReference type="KEGG" id="vg:9924818"/>
<dbReference type="OrthoDB" id="20660at10239"/>
<dbReference type="Proteomes" id="UP000001134">
    <property type="component" value="Genome"/>
</dbReference>
<dbReference type="GO" id="GO:0016020">
    <property type="term" value="C:membrane"/>
    <property type="evidence" value="ECO:0007669"/>
    <property type="project" value="UniProtKB-SubCell"/>
</dbReference>
<dbReference type="PANTHER" id="PTHR21389:SF0">
    <property type="entry name" value="ETOPOSIDE-INDUCED PROTEIN 2.4 HOMOLOG"/>
    <property type="match status" value="1"/>
</dbReference>
<dbReference type="PANTHER" id="PTHR21389">
    <property type="entry name" value="P53 INDUCED PROTEIN"/>
    <property type="match status" value="1"/>
</dbReference>
<evidence type="ECO:0000255" key="1"/>
<evidence type="ECO:0000305" key="2"/>
<comment type="subcellular location">
    <subcellularLocation>
        <location evidence="2">Membrane</location>
        <topology evidence="2">Multi-pass membrane protein</topology>
    </subcellularLocation>
</comment>
<sequence length="262" mass="31081">MSHISLNICKDIFCGFFDSVRIDIAIKKLYNDQKLQKKIIKIAKFNTIMYLVPYIITYTVLNTFDYDLFSIINIVYLFVNVISGLFHLLYFIDLIDIVCVYTKKLNRPISKLDSIGLAIVSFVYQLSMYIIMELIDMMLYKKLDVVSYLIKFIILTLYHSFCCFNNLWHYKNIDIHHRISLHEKLWAYYLGYGTIASLMYIYSNHPLMIYTYNIYMSILIILPFMIKTKYPKKQAYPSINLKIFSIIVGYFNYAIKLINNSN</sequence>
<organism>
    <name type="scientific">Acanthamoeba polyphaga mimivirus</name>
    <name type="common">APMV</name>
    <dbReference type="NCBI Taxonomy" id="212035"/>
    <lineage>
        <taxon>Viruses</taxon>
        <taxon>Varidnaviria</taxon>
        <taxon>Bamfordvirae</taxon>
        <taxon>Nucleocytoviricota</taxon>
        <taxon>Megaviricetes</taxon>
        <taxon>Imitervirales</taxon>
        <taxon>Mimiviridae</taxon>
        <taxon>Megamimivirinae</taxon>
        <taxon>Mimivirus</taxon>
        <taxon>Mimivirus bradfordmassiliense</taxon>
    </lineage>
</organism>
<gene>
    <name type="ordered locus">MIMI_L211</name>
</gene>
<name>YL211_MIMIV</name>
<accession>Q5UQ30</accession>
<feature type="chain" id="PRO_0000251108" description="Uncharacterized protein L211">
    <location>
        <begin position="1"/>
        <end position="262"/>
    </location>
</feature>
<feature type="transmembrane region" description="Helical" evidence="1">
    <location>
        <begin position="42"/>
        <end position="62"/>
    </location>
</feature>
<feature type="transmembrane region" description="Helical" evidence="1">
    <location>
        <begin position="71"/>
        <end position="91"/>
    </location>
</feature>
<feature type="transmembrane region" description="Helical" evidence="1">
    <location>
        <begin position="115"/>
        <end position="135"/>
    </location>
</feature>
<feature type="transmembrane region" description="Helical" evidence="1">
    <location>
        <begin position="145"/>
        <end position="165"/>
    </location>
</feature>
<feature type="transmembrane region" description="Helical" evidence="1">
    <location>
        <begin position="185"/>
        <end position="205"/>
    </location>
</feature>
<feature type="transmembrane region" description="Helical" evidence="1">
    <location>
        <begin position="206"/>
        <end position="226"/>
    </location>
</feature>
<feature type="transmembrane region" description="Helical" evidence="1">
    <location>
        <begin position="235"/>
        <end position="255"/>
    </location>
</feature>
<protein>
    <recommendedName>
        <fullName>Uncharacterized protein L211</fullName>
    </recommendedName>
</protein>
<keyword id="KW-0472">Membrane</keyword>
<keyword id="KW-1185">Reference proteome</keyword>
<keyword id="KW-0812">Transmembrane</keyword>
<keyword id="KW-1133">Transmembrane helix</keyword>
<reference key="1">
    <citation type="journal article" date="2004" name="Science">
        <title>The 1.2-megabase genome sequence of Mimivirus.</title>
        <authorList>
            <person name="Raoult D."/>
            <person name="Audic S."/>
            <person name="Robert C."/>
            <person name="Abergel C."/>
            <person name="Renesto P."/>
            <person name="Ogata H."/>
            <person name="La Scola B."/>
            <person name="Susan M."/>
            <person name="Claverie J.-M."/>
        </authorList>
    </citation>
    <scope>NUCLEOTIDE SEQUENCE [LARGE SCALE GENOMIC DNA]</scope>
    <source>
        <strain>Rowbotham-Bradford</strain>
    </source>
</reference>
<proteinExistence type="predicted"/>
<organismHost>
    <name type="scientific">Acanthamoeba polyphaga</name>
    <name type="common">Amoeba</name>
    <dbReference type="NCBI Taxonomy" id="5757"/>
</organismHost>